<protein>
    <recommendedName>
        <fullName evidence="1">tRNA uridine 5-carboxymethylaminomethyl modification enzyme MnmG</fullName>
    </recommendedName>
    <alternativeName>
        <fullName evidence="1">Glucose-inhibited division protein A</fullName>
    </alternativeName>
</protein>
<evidence type="ECO:0000255" key="1">
    <source>
        <dbReference type="HAMAP-Rule" id="MF_00129"/>
    </source>
</evidence>
<feature type="chain" id="PRO_1000071411" description="tRNA uridine 5-carboxymethylaminomethyl modification enzyme MnmG">
    <location>
        <begin position="1"/>
        <end position="625"/>
    </location>
</feature>
<feature type="binding site" evidence="1">
    <location>
        <begin position="11"/>
        <end position="16"/>
    </location>
    <ligand>
        <name>FAD</name>
        <dbReference type="ChEBI" id="CHEBI:57692"/>
    </ligand>
</feature>
<feature type="binding site" evidence="1">
    <location>
        <begin position="270"/>
        <end position="284"/>
    </location>
    <ligand>
        <name>NAD(+)</name>
        <dbReference type="ChEBI" id="CHEBI:57540"/>
    </ligand>
</feature>
<name>MNMG_AZOC5</name>
<accession>A8I266</accession>
<comment type="function">
    <text evidence="1">NAD-binding protein involved in the addition of a carboxymethylaminomethyl (cmnm) group at the wobble position (U34) of certain tRNAs, forming tRNA-cmnm(5)s(2)U34.</text>
</comment>
<comment type="cofactor">
    <cofactor evidence="1">
        <name>FAD</name>
        <dbReference type="ChEBI" id="CHEBI:57692"/>
    </cofactor>
</comment>
<comment type="subunit">
    <text evidence="1">Homodimer. Heterotetramer of two MnmE and two MnmG subunits.</text>
</comment>
<comment type="subcellular location">
    <subcellularLocation>
        <location evidence="1">Cytoplasm</location>
    </subcellularLocation>
</comment>
<comment type="similarity">
    <text evidence="1">Belongs to the MnmG family.</text>
</comment>
<reference key="1">
    <citation type="submission" date="2007-04" db="EMBL/GenBank/DDBJ databases">
        <title>Complete genome sequence of the nitrogen-fixing bacterium Azorhizobium caulinodans ORS571.</title>
        <authorList>
            <person name="Lee K.B."/>
            <person name="Backer P.D."/>
            <person name="Aono T."/>
            <person name="Liu C.T."/>
            <person name="Suzuki S."/>
            <person name="Suzuki T."/>
            <person name="Kaneko T."/>
            <person name="Yamada M."/>
            <person name="Tabata S."/>
            <person name="Kupfer D.M."/>
            <person name="Najar F.Z."/>
            <person name="Wiley G.B."/>
            <person name="Roe B."/>
            <person name="Binnewies T."/>
            <person name="Ussery D."/>
            <person name="Vereecke D."/>
            <person name="Gevers D."/>
            <person name="Holsters M."/>
            <person name="Oyaizu H."/>
        </authorList>
    </citation>
    <scope>NUCLEOTIDE SEQUENCE [LARGE SCALE GENOMIC DNA]</scope>
    <source>
        <strain>ATCC 43989 / DSM 5975 / JCM 20966 / LMG 6465 / NBRC 14845 / NCIMB 13405 / ORS 571</strain>
    </source>
</reference>
<proteinExistence type="inferred from homology"/>
<gene>
    <name evidence="1" type="primary">mnmG</name>
    <name evidence="1" type="synonym">gidA</name>
    <name type="ordered locus">AZC_4709</name>
</gene>
<dbReference type="EMBL" id="AP009384">
    <property type="protein sequence ID" value="BAF90707.1"/>
    <property type="molecule type" value="Genomic_DNA"/>
</dbReference>
<dbReference type="RefSeq" id="WP_012173228.1">
    <property type="nucleotide sequence ID" value="NC_009937.1"/>
</dbReference>
<dbReference type="SMR" id="A8I266"/>
<dbReference type="STRING" id="438753.AZC_4709"/>
<dbReference type="KEGG" id="azc:AZC_4709"/>
<dbReference type="eggNOG" id="COG0445">
    <property type="taxonomic scope" value="Bacteria"/>
</dbReference>
<dbReference type="HOGENOM" id="CLU_007831_2_2_5"/>
<dbReference type="Proteomes" id="UP000000270">
    <property type="component" value="Chromosome"/>
</dbReference>
<dbReference type="GO" id="GO:0005829">
    <property type="term" value="C:cytosol"/>
    <property type="evidence" value="ECO:0007669"/>
    <property type="project" value="TreeGrafter"/>
</dbReference>
<dbReference type="GO" id="GO:0050660">
    <property type="term" value="F:flavin adenine dinucleotide binding"/>
    <property type="evidence" value="ECO:0007669"/>
    <property type="project" value="UniProtKB-UniRule"/>
</dbReference>
<dbReference type="GO" id="GO:0030488">
    <property type="term" value="P:tRNA methylation"/>
    <property type="evidence" value="ECO:0007669"/>
    <property type="project" value="TreeGrafter"/>
</dbReference>
<dbReference type="GO" id="GO:0002098">
    <property type="term" value="P:tRNA wobble uridine modification"/>
    <property type="evidence" value="ECO:0007669"/>
    <property type="project" value="InterPro"/>
</dbReference>
<dbReference type="FunFam" id="3.50.50.60:FF:000145">
    <property type="entry name" value="tRNA uridine 5-carboxymethylaminomethyl modification enzyme"/>
    <property type="match status" value="1"/>
</dbReference>
<dbReference type="FunFam" id="1.10.150.570:FF:000001">
    <property type="entry name" value="tRNA uridine 5-carboxymethylaminomethyl modification enzyme MnmG"/>
    <property type="match status" value="1"/>
</dbReference>
<dbReference type="FunFam" id="3.50.50.60:FF:000002">
    <property type="entry name" value="tRNA uridine 5-carboxymethylaminomethyl modification enzyme MnmG"/>
    <property type="match status" value="1"/>
</dbReference>
<dbReference type="Gene3D" id="3.50.50.60">
    <property type="entry name" value="FAD/NAD(P)-binding domain"/>
    <property type="match status" value="2"/>
</dbReference>
<dbReference type="Gene3D" id="1.10.150.570">
    <property type="entry name" value="GidA associated domain, C-terminal subdomain"/>
    <property type="match status" value="1"/>
</dbReference>
<dbReference type="Gene3D" id="1.10.10.1800">
    <property type="entry name" value="tRNA uridine 5-carboxymethylaminomethyl modification enzyme MnmG/GidA"/>
    <property type="match status" value="1"/>
</dbReference>
<dbReference type="HAMAP" id="MF_00129">
    <property type="entry name" value="MnmG_GidA"/>
    <property type="match status" value="1"/>
</dbReference>
<dbReference type="InterPro" id="IPR036188">
    <property type="entry name" value="FAD/NAD-bd_sf"/>
</dbReference>
<dbReference type="InterPro" id="IPR049312">
    <property type="entry name" value="GIDA_C_N"/>
</dbReference>
<dbReference type="InterPro" id="IPR004416">
    <property type="entry name" value="MnmG"/>
</dbReference>
<dbReference type="InterPro" id="IPR002218">
    <property type="entry name" value="MnmG-rel"/>
</dbReference>
<dbReference type="InterPro" id="IPR020595">
    <property type="entry name" value="MnmG-rel_CS"/>
</dbReference>
<dbReference type="InterPro" id="IPR026904">
    <property type="entry name" value="MnmG_C"/>
</dbReference>
<dbReference type="InterPro" id="IPR047001">
    <property type="entry name" value="MnmG_C_subdom"/>
</dbReference>
<dbReference type="InterPro" id="IPR044920">
    <property type="entry name" value="MnmG_C_subdom_sf"/>
</dbReference>
<dbReference type="InterPro" id="IPR040131">
    <property type="entry name" value="MnmG_N"/>
</dbReference>
<dbReference type="NCBIfam" id="TIGR00136">
    <property type="entry name" value="mnmG_gidA"/>
    <property type="match status" value="1"/>
</dbReference>
<dbReference type="PANTHER" id="PTHR11806">
    <property type="entry name" value="GLUCOSE INHIBITED DIVISION PROTEIN A"/>
    <property type="match status" value="1"/>
</dbReference>
<dbReference type="PANTHER" id="PTHR11806:SF0">
    <property type="entry name" value="PROTEIN MTO1 HOMOLOG, MITOCHONDRIAL"/>
    <property type="match status" value="1"/>
</dbReference>
<dbReference type="Pfam" id="PF01134">
    <property type="entry name" value="GIDA"/>
    <property type="match status" value="1"/>
</dbReference>
<dbReference type="Pfam" id="PF21680">
    <property type="entry name" value="GIDA_C_1st"/>
    <property type="match status" value="1"/>
</dbReference>
<dbReference type="Pfam" id="PF13932">
    <property type="entry name" value="SAM_GIDA_C"/>
    <property type="match status" value="1"/>
</dbReference>
<dbReference type="SMART" id="SM01228">
    <property type="entry name" value="GIDA_assoc_3"/>
    <property type="match status" value="1"/>
</dbReference>
<dbReference type="SUPFAM" id="SSF51905">
    <property type="entry name" value="FAD/NAD(P)-binding domain"/>
    <property type="match status" value="1"/>
</dbReference>
<dbReference type="PROSITE" id="PS01280">
    <property type="entry name" value="GIDA_1"/>
    <property type="match status" value="1"/>
</dbReference>
<dbReference type="PROSITE" id="PS01281">
    <property type="entry name" value="GIDA_2"/>
    <property type="match status" value="1"/>
</dbReference>
<sequence>MSKAFDVMVVGGGHAGCEAAAAAARLGARTALVTHRADTIGAMSCNPAIGGLGKGHLVREIDALDGLMGRVADQGGIQFRLLNRRKGPAVRGPRAQADRKLYARAMQVALAAQPNLEIVEGEADDLLVTEGRITGLALTDGRTFGCGAVVLTTGTFLNGLIHMGEVQIPAGRIGEAPARGLSGTLARLGLTLGRLKTGTPPRLDGRTIDWASLEMQPGDDDPEPFSALTTALPNPQVSCGITRTTQATHDVIRANLSRSAMYSGRIESTGPRYCPSIEDKVVRFGDRDGHQIFLEPEGLDDPTVYPNGISTSLPEDVQLAVLATIPGLERVVMSRPGYAIEYDHVDPRELEPTLEAKRAPGLFLAGQINGTTGYEEAAAQGLLAGLNAARRAGGGEGVVIDRAEGYIGVMVDDLVTRGVSEPYRMFTSRAEYRLTLRADNADQRLTQRGLDLGLVGTERAAVFGRRMAALDAARERARTLNITPNEAAKHGLALNKDGQRRSAFDLLAYPDITLETLAGIWPEFGALEPAIGAQLEIDAKYAVYLDRQAADIATLRRDEDLVLPDELGYDGLPGLSNELKAKLTRVRPRTIGQAGRMEGMTPAALALLVTYARRTGSKKDEVRTA</sequence>
<keyword id="KW-0963">Cytoplasm</keyword>
<keyword id="KW-0274">FAD</keyword>
<keyword id="KW-0285">Flavoprotein</keyword>
<keyword id="KW-0520">NAD</keyword>
<keyword id="KW-1185">Reference proteome</keyword>
<keyword id="KW-0819">tRNA processing</keyword>
<organism>
    <name type="scientific">Azorhizobium caulinodans (strain ATCC 43989 / DSM 5975 / JCM 20966 / LMG 6465 / NBRC 14845 / NCIMB 13405 / ORS 571)</name>
    <dbReference type="NCBI Taxonomy" id="438753"/>
    <lineage>
        <taxon>Bacteria</taxon>
        <taxon>Pseudomonadati</taxon>
        <taxon>Pseudomonadota</taxon>
        <taxon>Alphaproteobacteria</taxon>
        <taxon>Hyphomicrobiales</taxon>
        <taxon>Xanthobacteraceae</taxon>
        <taxon>Azorhizobium</taxon>
    </lineage>
</organism>